<sequence>MIDLTGKTSLITGASGGIGGAIARLLHKLGSHVIISGSNEEKLKSLGNVLKDNYTIEICNLANKEECSNLISKAPKLDILVCNAGITSDTLAIRMKDEDFDKVIDINLKANFILNREAIKKMMQNRYGRIINISSIVGISGNPGQANYCASKAGLIGMTKSLSYEVATRGITVNAVAPGFIKSDMTDKLNEKQREAIVQKIPLGTYGMPEDVANAVAFLASDQASYITGQTIHVNGGMLMV</sequence>
<protein>
    <recommendedName>
        <fullName>3-oxoacyl-[acyl-carrier-protein] reductase FabG</fullName>
        <ecNumber>1.1.1.100</ecNumber>
    </recommendedName>
    <alternativeName>
        <fullName>3-ketoacyl-acyl carrier protein reductase</fullName>
    </alternativeName>
    <alternativeName>
        <fullName>Beta-Ketoacyl-acyl carrier protein reductase</fullName>
    </alternativeName>
    <alternativeName>
        <fullName>Beta-ketoacyl-ACP reductase</fullName>
    </alternativeName>
</protein>
<feature type="chain" id="PRO_0000286633" description="3-oxoacyl-[acyl-carrier-protein] reductase FabG">
    <location>
        <begin position="1"/>
        <end position="241"/>
    </location>
</feature>
<feature type="active site" description="Proton acceptor" evidence="2">
    <location>
        <position position="148"/>
    </location>
</feature>
<feature type="binding site" evidence="1">
    <location>
        <begin position="13"/>
        <end position="16"/>
    </location>
    <ligand>
        <name>NADP(+)</name>
        <dbReference type="ChEBI" id="CHEBI:58349"/>
    </ligand>
</feature>
<feature type="binding site" evidence="1">
    <location>
        <position position="38"/>
    </location>
    <ligand>
        <name>NADP(+)</name>
        <dbReference type="ChEBI" id="CHEBI:58349"/>
    </ligand>
</feature>
<feature type="binding site" evidence="1">
    <location>
        <begin position="57"/>
        <end position="58"/>
    </location>
    <ligand>
        <name>NADP(+)</name>
        <dbReference type="ChEBI" id="CHEBI:58349"/>
    </ligand>
</feature>
<feature type="binding site" evidence="1">
    <location>
        <position position="83"/>
    </location>
    <ligand>
        <name>NADP(+)</name>
        <dbReference type="ChEBI" id="CHEBI:58349"/>
    </ligand>
</feature>
<feature type="binding site" evidence="1">
    <location>
        <position position="135"/>
    </location>
    <ligand>
        <name>substrate</name>
    </ligand>
</feature>
<feature type="binding site" evidence="1">
    <location>
        <begin position="148"/>
        <end position="152"/>
    </location>
    <ligand>
        <name>NADP(+)</name>
        <dbReference type="ChEBI" id="CHEBI:58349"/>
    </ligand>
</feature>
<feature type="binding site" evidence="1">
    <location>
        <position position="181"/>
    </location>
    <ligand>
        <name>NADP(+)</name>
        <dbReference type="ChEBI" id="CHEBI:58349"/>
    </ligand>
</feature>
<dbReference type="EC" id="1.1.1.100"/>
<dbReference type="EMBL" id="CP000053">
    <property type="protein sequence ID" value="AAY62073.1"/>
    <property type="molecule type" value="Genomic_DNA"/>
</dbReference>
<dbReference type="SMR" id="Q4UK62"/>
<dbReference type="STRING" id="315456.RF_1222"/>
<dbReference type="KEGG" id="rfe:RF_1222"/>
<dbReference type="eggNOG" id="COG1028">
    <property type="taxonomic scope" value="Bacteria"/>
</dbReference>
<dbReference type="HOGENOM" id="CLU_010194_1_3_5"/>
<dbReference type="OrthoDB" id="9804774at2"/>
<dbReference type="UniPathway" id="UPA00094"/>
<dbReference type="Proteomes" id="UP000008548">
    <property type="component" value="Chromosome"/>
</dbReference>
<dbReference type="GO" id="GO:0004316">
    <property type="term" value="F:3-oxoacyl-[acyl-carrier-protein] reductase (NADPH) activity"/>
    <property type="evidence" value="ECO:0000250"/>
    <property type="project" value="UniProtKB"/>
</dbReference>
<dbReference type="GO" id="GO:0051287">
    <property type="term" value="F:NAD binding"/>
    <property type="evidence" value="ECO:0007669"/>
    <property type="project" value="InterPro"/>
</dbReference>
<dbReference type="GO" id="GO:0050661">
    <property type="term" value="F:NADP binding"/>
    <property type="evidence" value="ECO:0000250"/>
    <property type="project" value="UniProtKB"/>
</dbReference>
<dbReference type="GO" id="GO:0030497">
    <property type="term" value="P:fatty acid elongation"/>
    <property type="evidence" value="ECO:0000250"/>
    <property type="project" value="UniProtKB"/>
</dbReference>
<dbReference type="CDD" id="cd05333">
    <property type="entry name" value="BKR_SDR_c"/>
    <property type="match status" value="1"/>
</dbReference>
<dbReference type="FunFam" id="3.40.50.720:FF:000806">
    <property type="entry name" value="3-oxoacyl-[acyl-carrier-protein] reductase FabG"/>
    <property type="match status" value="1"/>
</dbReference>
<dbReference type="Gene3D" id="3.40.50.720">
    <property type="entry name" value="NAD(P)-binding Rossmann-like Domain"/>
    <property type="match status" value="1"/>
</dbReference>
<dbReference type="InterPro" id="IPR011284">
    <property type="entry name" value="3oxo_ACP_reduc"/>
</dbReference>
<dbReference type="InterPro" id="IPR036291">
    <property type="entry name" value="NAD(P)-bd_dom_sf"/>
</dbReference>
<dbReference type="InterPro" id="IPR020904">
    <property type="entry name" value="Sc_DH/Rdtase_CS"/>
</dbReference>
<dbReference type="InterPro" id="IPR050259">
    <property type="entry name" value="SDR"/>
</dbReference>
<dbReference type="InterPro" id="IPR002347">
    <property type="entry name" value="SDR_fam"/>
</dbReference>
<dbReference type="NCBIfam" id="TIGR01830">
    <property type="entry name" value="3oxo_ACP_reduc"/>
    <property type="match status" value="1"/>
</dbReference>
<dbReference type="NCBIfam" id="NF004199">
    <property type="entry name" value="PRK05653.1-4"/>
    <property type="match status" value="1"/>
</dbReference>
<dbReference type="NCBIfam" id="NF005559">
    <property type="entry name" value="PRK07231.1"/>
    <property type="match status" value="1"/>
</dbReference>
<dbReference type="NCBIfam" id="NF009466">
    <property type="entry name" value="PRK12826.1-2"/>
    <property type="match status" value="1"/>
</dbReference>
<dbReference type="PANTHER" id="PTHR42879">
    <property type="entry name" value="3-OXOACYL-(ACYL-CARRIER-PROTEIN) REDUCTASE"/>
    <property type="match status" value="1"/>
</dbReference>
<dbReference type="PANTHER" id="PTHR42879:SF2">
    <property type="entry name" value="3-OXOACYL-[ACYL-CARRIER-PROTEIN] REDUCTASE FABG"/>
    <property type="match status" value="1"/>
</dbReference>
<dbReference type="Pfam" id="PF13561">
    <property type="entry name" value="adh_short_C2"/>
    <property type="match status" value="1"/>
</dbReference>
<dbReference type="PRINTS" id="PR00081">
    <property type="entry name" value="GDHRDH"/>
</dbReference>
<dbReference type="PRINTS" id="PR00080">
    <property type="entry name" value="SDRFAMILY"/>
</dbReference>
<dbReference type="SMART" id="SM00822">
    <property type="entry name" value="PKS_KR"/>
    <property type="match status" value="1"/>
</dbReference>
<dbReference type="SUPFAM" id="SSF51735">
    <property type="entry name" value="NAD(P)-binding Rossmann-fold domains"/>
    <property type="match status" value="1"/>
</dbReference>
<dbReference type="PROSITE" id="PS00061">
    <property type="entry name" value="ADH_SHORT"/>
    <property type="match status" value="1"/>
</dbReference>
<gene>
    <name type="primary">fabG</name>
    <name type="ordered locus">RF_1222</name>
</gene>
<accession>Q4UK62</accession>
<reference key="1">
    <citation type="journal article" date="2005" name="PLoS Biol.">
        <title>The genome sequence of Rickettsia felis identifies the first putative conjugative plasmid in an obligate intracellular parasite.</title>
        <authorList>
            <person name="Ogata H."/>
            <person name="Renesto P."/>
            <person name="Audic S."/>
            <person name="Robert C."/>
            <person name="Blanc G."/>
            <person name="Fournier P.-E."/>
            <person name="Parinello H."/>
            <person name="Claverie J.-M."/>
            <person name="Raoult D."/>
        </authorList>
    </citation>
    <scope>NUCLEOTIDE SEQUENCE [LARGE SCALE GENOMIC DNA]</scope>
    <source>
        <strain>ATCC VR-1525 / URRWXCal2</strain>
    </source>
</reference>
<evidence type="ECO:0000250" key="1"/>
<evidence type="ECO:0000255" key="2">
    <source>
        <dbReference type="PROSITE-ProRule" id="PRU10001"/>
    </source>
</evidence>
<evidence type="ECO:0000305" key="3"/>
<name>FABG_RICFE</name>
<comment type="function">
    <text evidence="1">Catalyzes the NADPH-dependent reduction of beta-ketoacyl-ACP substrates to beta-hydroxyacyl-ACP products, the first reductive step in the elongation cycle of fatty acid biosynthesis.</text>
</comment>
<comment type="catalytic activity">
    <reaction>
        <text>a (3R)-hydroxyacyl-[ACP] + NADP(+) = a 3-oxoacyl-[ACP] + NADPH + H(+)</text>
        <dbReference type="Rhea" id="RHEA:17397"/>
        <dbReference type="Rhea" id="RHEA-COMP:9916"/>
        <dbReference type="Rhea" id="RHEA-COMP:9945"/>
        <dbReference type="ChEBI" id="CHEBI:15378"/>
        <dbReference type="ChEBI" id="CHEBI:57783"/>
        <dbReference type="ChEBI" id="CHEBI:58349"/>
        <dbReference type="ChEBI" id="CHEBI:78776"/>
        <dbReference type="ChEBI" id="CHEBI:78827"/>
        <dbReference type="EC" id="1.1.1.100"/>
    </reaction>
</comment>
<comment type="pathway">
    <text>Lipid metabolism; fatty acid biosynthesis.</text>
</comment>
<comment type="subunit">
    <text evidence="1">Homotetramer.</text>
</comment>
<comment type="similarity">
    <text evidence="3">Belongs to the short-chain dehydrogenases/reductases (SDR) family.</text>
</comment>
<organism>
    <name type="scientific">Rickettsia felis (strain ATCC VR-1525 / URRWXCal2)</name>
    <name type="common">Rickettsia azadi</name>
    <dbReference type="NCBI Taxonomy" id="315456"/>
    <lineage>
        <taxon>Bacteria</taxon>
        <taxon>Pseudomonadati</taxon>
        <taxon>Pseudomonadota</taxon>
        <taxon>Alphaproteobacteria</taxon>
        <taxon>Rickettsiales</taxon>
        <taxon>Rickettsiaceae</taxon>
        <taxon>Rickettsieae</taxon>
        <taxon>Rickettsia</taxon>
        <taxon>spotted fever group</taxon>
    </lineage>
</organism>
<keyword id="KW-0275">Fatty acid biosynthesis</keyword>
<keyword id="KW-0276">Fatty acid metabolism</keyword>
<keyword id="KW-0444">Lipid biosynthesis</keyword>
<keyword id="KW-0443">Lipid metabolism</keyword>
<keyword id="KW-0521">NADP</keyword>
<keyword id="KW-0560">Oxidoreductase</keyword>
<proteinExistence type="inferred from homology"/>